<gene>
    <name evidence="1" type="primary">serS</name>
    <name type="ordered locus">M1627_1645</name>
</gene>
<name>SYS_SACI3</name>
<feature type="chain" id="PRO_1000203769" description="Serine--tRNA ligase">
    <location>
        <begin position="1"/>
        <end position="457"/>
    </location>
</feature>
<feature type="binding site" evidence="1">
    <location>
        <begin position="252"/>
        <end position="254"/>
    </location>
    <ligand>
        <name>L-serine</name>
        <dbReference type="ChEBI" id="CHEBI:33384"/>
    </ligand>
</feature>
<feature type="binding site" evidence="1">
    <location>
        <begin position="283"/>
        <end position="285"/>
    </location>
    <ligand>
        <name>ATP</name>
        <dbReference type="ChEBI" id="CHEBI:30616"/>
    </ligand>
</feature>
<feature type="binding site" evidence="1">
    <location>
        <position position="299"/>
    </location>
    <ligand>
        <name>ATP</name>
        <dbReference type="ChEBI" id="CHEBI:30616"/>
    </ligand>
</feature>
<feature type="binding site" evidence="1">
    <location>
        <position position="306"/>
    </location>
    <ligand>
        <name>L-serine</name>
        <dbReference type="ChEBI" id="CHEBI:33384"/>
    </ligand>
</feature>
<feature type="binding site" evidence="1">
    <location>
        <begin position="370"/>
        <end position="373"/>
    </location>
    <ligand>
        <name>ATP</name>
        <dbReference type="ChEBI" id="CHEBI:30616"/>
    </ligand>
</feature>
<feature type="binding site" evidence="1">
    <location>
        <position position="406"/>
    </location>
    <ligand>
        <name>L-serine</name>
        <dbReference type="ChEBI" id="CHEBI:33384"/>
    </ligand>
</feature>
<protein>
    <recommendedName>
        <fullName evidence="1">Serine--tRNA ligase</fullName>
        <ecNumber evidence="1">6.1.1.11</ecNumber>
    </recommendedName>
    <alternativeName>
        <fullName evidence="1">Seryl-tRNA synthetase</fullName>
        <shortName evidence="1">SerRS</shortName>
    </alternativeName>
    <alternativeName>
        <fullName evidence="1">Seryl-tRNA(Ser/Sec) synthetase</fullName>
    </alternativeName>
</protein>
<keyword id="KW-0030">Aminoacyl-tRNA synthetase</keyword>
<keyword id="KW-0067">ATP-binding</keyword>
<keyword id="KW-0963">Cytoplasm</keyword>
<keyword id="KW-0436">Ligase</keyword>
<keyword id="KW-0547">Nucleotide-binding</keyword>
<keyword id="KW-0648">Protein biosynthesis</keyword>
<reference key="1">
    <citation type="journal article" date="2009" name="Proc. Natl. Acad. Sci. U.S.A.">
        <title>Biogeography of the Sulfolobus islandicus pan-genome.</title>
        <authorList>
            <person name="Reno M.L."/>
            <person name="Held N.L."/>
            <person name="Fields C.J."/>
            <person name="Burke P.V."/>
            <person name="Whitaker R.J."/>
        </authorList>
    </citation>
    <scope>NUCLEOTIDE SEQUENCE [LARGE SCALE GENOMIC DNA]</scope>
    <source>
        <strain>M.16.27</strain>
    </source>
</reference>
<comment type="function">
    <text evidence="1">Catalyzes the attachment of serine to tRNA(Ser). Is also able to aminoacylate tRNA(Sec) with serine, to form the misacylated tRNA L-seryl-tRNA(Sec), which will be further converted into selenocysteinyl-tRNA(Sec).</text>
</comment>
<comment type="catalytic activity">
    <reaction evidence="1">
        <text>tRNA(Ser) + L-serine + ATP = L-seryl-tRNA(Ser) + AMP + diphosphate + H(+)</text>
        <dbReference type="Rhea" id="RHEA:12292"/>
        <dbReference type="Rhea" id="RHEA-COMP:9669"/>
        <dbReference type="Rhea" id="RHEA-COMP:9703"/>
        <dbReference type="ChEBI" id="CHEBI:15378"/>
        <dbReference type="ChEBI" id="CHEBI:30616"/>
        <dbReference type="ChEBI" id="CHEBI:33019"/>
        <dbReference type="ChEBI" id="CHEBI:33384"/>
        <dbReference type="ChEBI" id="CHEBI:78442"/>
        <dbReference type="ChEBI" id="CHEBI:78533"/>
        <dbReference type="ChEBI" id="CHEBI:456215"/>
        <dbReference type="EC" id="6.1.1.11"/>
    </reaction>
</comment>
<comment type="catalytic activity">
    <reaction evidence="1">
        <text>tRNA(Sec) + L-serine + ATP = L-seryl-tRNA(Sec) + AMP + diphosphate + H(+)</text>
        <dbReference type="Rhea" id="RHEA:42580"/>
        <dbReference type="Rhea" id="RHEA-COMP:9742"/>
        <dbReference type="Rhea" id="RHEA-COMP:10128"/>
        <dbReference type="ChEBI" id="CHEBI:15378"/>
        <dbReference type="ChEBI" id="CHEBI:30616"/>
        <dbReference type="ChEBI" id="CHEBI:33019"/>
        <dbReference type="ChEBI" id="CHEBI:33384"/>
        <dbReference type="ChEBI" id="CHEBI:78442"/>
        <dbReference type="ChEBI" id="CHEBI:78533"/>
        <dbReference type="ChEBI" id="CHEBI:456215"/>
        <dbReference type="EC" id="6.1.1.11"/>
    </reaction>
</comment>
<comment type="pathway">
    <text evidence="1">Aminoacyl-tRNA biosynthesis; selenocysteinyl-tRNA(Sec) biosynthesis; L-seryl-tRNA(Sec) from L-serine and tRNA(Sec): step 1/1.</text>
</comment>
<comment type="subunit">
    <text evidence="1">Homodimer. The tRNA molecule binds across the dimer.</text>
</comment>
<comment type="subcellular location">
    <subcellularLocation>
        <location evidence="1">Cytoplasm</location>
    </subcellularLocation>
</comment>
<comment type="domain">
    <text evidence="1">Consists of two distinct domains, a catalytic core and a N-terminal extension that is involved in tRNA binding.</text>
</comment>
<comment type="similarity">
    <text evidence="1">Belongs to the class-II aminoacyl-tRNA synthetase family. Type-1 seryl-tRNA synthetase subfamily.</text>
</comment>
<dbReference type="EC" id="6.1.1.11" evidence="1"/>
<dbReference type="EMBL" id="CP001401">
    <property type="protein sequence ID" value="ACP55525.1"/>
    <property type="molecule type" value="Genomic_DNA"/>
</dbReference>
<dbReference type="RefSeq" id="WP_012713805.1">
    <property type="nucleotide sequence ID" value="NC_012632.1"/>
</dbReference>
<dbReference type="SMR" id="C3N6A0"/>
<dbReference type="GeneID" id="84058936"/>
<dbReference type="KEGG" id="sim:M1627_1645"/>
<dbReference type="HOGENOM" id="CLU_023797_0_1_2"/>
<dbReference type="UniPathway" id="UPA00906">
    <property type="reaction ID" value="UER00895"/>
</dbReference>
<dbReference type="Proteomes" id="UP000002307">
    <property type="component" value="Chromosome"/>
</dbReference>
<dbReference type="GO" id="GO:0005737">
    <property type="term" value="C:cytoplasm"/>
    <property type="evidence" value="ECO:0007669"/>
    <property type="project" value="UniProtKB-SubCell"/>
</dbReference>
<dbReference type="GO" id="GO:0005524">
    <property type="term" value="F:ATP binding"/>
    <property type="evidence" value="ECO:0007669"/>
    <property type="project" value="UniProtKB-UniRule"/>
</dbReference>
<dbReference type="GO" id="GO:0004828">
    <property type="term" value="F:serine-tRNA ligase activity"/>
    <property type="evidence" value="ECO:0007669"/>
    <property type="project" value="UniProtKB-UniRule"/>
</dbReference>
<dbReference type="GO" id="GO:0016260">
    <property type="term" value="P:selenocysteine biosynthetic process"/>
    <property type="evidence" value="ECO:0007669"/>
    <property type="project" value="UniProtKB-UniRule"/>
</dbReference>
<dbReference type="GO" id="GO:0006434">
    <property type="term" value="P:seryl-tRNA aminoacylation"/>
    <property type="evidence" value="ECO:0007669"/>
    <property type="project" value="UniProtKB-UniRule"/>
</dbReference>
<dbReference type="CDD" id="cd00770">
    <property type="entry name" value="SerRS_core"/>
    <property type="match status" value="1"/>
</dbReference>
<dbReference type="FunFam" id="1.10.287.40:FF:000004">
    <property type="entry name" value="Serine--tRNA ligase"/>
    <property type="match status" value="1"/>
</dbReference>
<dbReference type="FunFam" id="3.30.930.10:FF:000048">
    <property type="entry name" value="Serine--tRNA ligase"/>
    <property type="match status" value="1"/>
</dbReference>
<dbReference type="Gene3D" id="3.30.930.10">
    <property type="entry name" value="Bira Bifunctional Protein, Domain 2"/>
    <property type="match status" value="1"/>
</dbReference>
<dbReference type="Gene3D" id="1.10.287.40">
    <property type="entry name" value="Serine-tRNA synthetase, tRNA binding domain"/>
    <property type="match status" value="1"/>
</dbReference>
<dbReference type="HAMAP" id="MF_00176">
    <property type="entry name" value="Ser_tRNA_synth_type1"/>
    <property type="match status" value="1"/>
</dbReference>
<dbReference type="InterPro" id="IPR002314">
    <property type="entry name" value="aa-tRNA-synt_IIb"/>
</dbReference>
<dbReference type="InterPro" id="IPR006195">
    <property type="entry name" value="aa-tRNA-synth_II"/>
</dbReference>
<dbReference type="InterPro" id="IPR045864">
    <property type="entry name" value="aa-tRNA-synth_II/BPL/LPL"/>
</dbReference>
<dbReference type="InterPro" id="IPR002317">
    <property type="entry name" value="Ser-tRNA-ligase_type_1"/>
</dbReference>
<dbReference type="InterPro" id="IPR015866">
    <property type="entry name" value="Ser-tRNA-synth_1_N"/>
</dbReference>
<dbReference type="InterPro" id="IPR042103">
    <property type="entry name" value="SerRS_1_N_sf"/>
</dbReference>
<dbReference type="InterPro" id="IPR033729">
    <property type="entry name" value="SerRS_core"/>
</dbReference>
<dbReference type="InterPro" id="IPR010978">
    <property type="entry name" value="tRNA-bd_arm"/>
</dbReference>
<dbReference type="NCBIfam" id="TIGR00414">
    <property type="entry name" value="serS"/>
    <property type="match status" value="1"/>
</dbReference>
<dbReference type="PANTHER" id="PTHR11778">
    <property type="entry name" value="SERYL-TRNA SYNTHETASE"/>
    <property type="match status" value="1"/>
</dbReference>
<dbReference type="Pfam" id="PF02403">
    <property type="entry name" value="Seryl_tRNA_N"/>
    <property type="match status" value="1"/>
</dbReference>
<dbReference type="Pfam" id="PF00587">
    <property type="entry name" value="tRNA-synt_2b"/>
    <property type="match status" value="1"/>
</dbReference>
<dbReference type="PIRSF" id="PIRSF001529">
    <property type="entry name" value="Ser-tRNA-synth_IIa"/>
    <property type="match status" value="1"/>
</dbReference>
<dbReference type="PRINTS" id="PR00981">
    <property type="entry name" value="TRNASYNTHSER"/>
</dbReference>
<dbReference type="SUPFAM" id="SSF55681">
    <property type="entry name" value="Class II aaRS and biotin synthetases"/>
    <property type="match status" value="1"/>
</dbReference>
<dbReference type="SUPFAM" id="SSF46589">
    <property type="entry name" value="tRNA-binding arm"/>
    <property type="match status" value="1"/>
</dbReference>
<dbReference type="PROSITE" id="PS50862">
    <property type="entry name" value="AA_TRNA_LIGASE_II"/>
    <property type="match status" value="1"/>
</dbReference>
<accession>C3N6A0</accession>
<proteinExistence type="inferred from homology"/>
<evidence type="ECO:0000255" key="1">
    <source>
        <dbReference type="HAMAP-Rule" id="MF_00176"/>
    </source>
</evidence>
<organism>
    <name type="scientific">Saccharolobus islandicus (strain M.16.27)</name>
    <name type="common">Sulfolobus islandicus</name>
    <dbReference type="NCBI Taxonomy" id="427318"/>
    <lineage>
        <taxon>Archaea</taxon>
        <taxon>Thermoproteota</taxon>
        <taxon>Thermoprotei</taxon>
        <taxon>Sulfolobales</taxon>
        <taxon>Sulfolobaceae</taxon>
        <taxon>Saccharolobus</taxon>
    </lineage>
</organism>
<sequence>MSWSILEFLRKNPEELKNNLKRRAIDVSLVDKAVELDKKWRQVLQEVERLRHQHNVLSSQIPKLSGEERKKKIEESKNLLKILEDKEKELEKIEVERDRLLSSLPNLVADDVPNGPDDSYNIPIKFWGKFKVYEGDVEEFLRQTKDANVNYEIIKWKPKGHAEMLEDVLHLGNTLKAAEIAGSRFYYLFNDIVWLDFALLLFAIDYITQQGYTLVLPPYMLRGEVIQSVIDLDTFKDAIYKIENEDLYLIATAEHSIAAMFFKEEIEKDKLPLKFAGISPAFRKEAGAANKDLKGIFRVHQFHKVEQFIFSTPEDSWKYHAELITNAESIFQQLELPYRIVNIASGDLGACAAKKFDLEVWMPAQAKFREMVSCSNCTDWQAFRMKIRYVDRKNNKRGYVHTLNSTAIASTRTITAILENYQREDGVVEVPKVLRKYLEIFPKAPKDYIYPLKNKII</sequence>